<proteinExistence type="inferred from homology"/>
<sequence>MNDVTEPVSATLAERAKRTLGKRNLVFIGLMGAGKSAIGRLTAQALGVPFVDSDHEIERVSRMTVSDLFATYGEEEFRALEARVLKRLLRSGPRVVSTGGGAYINERSRRHIKKGGLTIWLNAELDVLWERVNKRDTRPLLKTENPKQTLENLMRARYPIYAEADLTVLSRDVKKEAMVEEVLAAVADHQKA</sequence>
<comment type="function">
    <text evidence="1">Catalyzes the specific phosphorylation of the 3-hydroxyl group of shikimic acid using ATP as a cosubstrate.</text>
</comment>
<comment type="catalytic activity">
    <reaction evidence="1">
        <text>shikimate + ATP = 3-phosphoshikimate + ADP + H(+)</text>
        <dbReference type="Rhea" id="RHEA:13121"/>
        <dbReference type="ChEBI" id="CHEBI:15378"/>
        <dbReference type="ChEBI" id="CHEBI:30616"/>
        <dbReference type="ChEBI" id="CHEBI:36208"/>
        <dbReference type="ChEBI" id="CHEBI:145989"/>
        <dbReference type="ChEBI" id="CHEBI:456216"/>
        <dbReference type="EC" id="2.7.1.71"/>
    </reaction>
</comment>
<comment type="cofactor">
    <cofactor evidence="1">
        <name>Mg(2+)</name>
        <dbReference type="ChEBI" id="CHEBI:18420"/>
    </cofactor>
    <text evidence="1">Binds 1 Mg(2+) ion per subunit.</text>
</comment>
<comment type="pathway">
    <text evidence="1">Metabolic intermediate biosynthesis; chorismate biosynthesis; chorismate from D-erythrose 4-phosphate and phosphoenolpyruvate: step 5/7.</text>
</comment>
<comment type="subunit">
    <text evidence="1">Monomer.</text>
</comment>
<comment type="subcellular location">
    <subcellularLocation>
        <location evidence="1">Cytoplasm</location>
    </subcellularLocation>
</comment>
<comment type="similarity">
    <text evidence="1">Belongs to the shikimate kinase family.</text>
</comment>
<reference key="1">
    <citation type="journal article" date="2001" name="Proc. Natl. Acad. Sci. U.S.A.">
        <title>Analysis of the chromosome sequence of the legume symbiont Sinorhizobium meliloti strain 1021.</title>
        <authorList>
            <person name="Capela D."/>
            <person name="Barloy-Hubler F."/>
            <person name="Gouzy J."/>
            <person name="Bothe G."/>
            <person name="Ampe F."/>
            <person name="Batut J."/>
            <person name="Boistard P."/>
            <person name="Becker A."/>
            <person name="Boutry M."/>
            <person name="Cadieu E."/>
            <person name="Dreano S."/>
            <person name="Gloux S."/>
            <person name="Godrie T."/>
            <person name="Goffeau A."/>
            <person name="Kahn D."/>
            <person name="Kiss E."/>
            <person name="Lelaure V."/>
            <person name="Masuy D."/>
            <person name="Pohl T."/>
            <person name="Portetelle D."/>
            <person name="Puehler A."/>
            <person name="Purnelle B."/>
            <person name="Ramsperger U."/>
            <person name="Renard C."/>
            <person name="Thebault P."/>
            <person name="Vandenbol M."/>
            <person name="Weidner S."/>
            <person name="Galibert F."/>
        </authorList>
    </citation>
    <scope>NUCLEOTIDE SEQUENCE [LARGE SCALE GENOMIC DNA]</scope>
    <source>
        <strain>1021</strain>
    </source>
</reference>
<reference key="2">
    <citation type="journal article" date="2001" name="Science">
        <title>The composite genome of the legume symbiont Sinorhizobium meliloti.</title>
        <authorList>
            <person name="Galibert F."/>
            <person name="Finan T.M."/>
            <person name="Long S.R."/>
            <person name="Puehler A."/>
            <person name="Abola P."/>
            <person name="Ampe F."/>
            <person name="Barloy-Hubler F."/>
            <person name="Barnett M.J."/>
            <person name="Becker A."/>
            <person name="Boistard P."/>
            <person name="Bothe G."/>
            <person name="Boutry M."/>
            <person name="Bowser L."/>
            <person name="Buhrmester J."/>
            <person name="Cadieu E."/>
            <person name="Capela D."/>
            <person name="Chain P."/>
            <person name="Cowie A."/>
            <person name="Davis R.W."/>
            <person name="Dreano S."/>
            <person name="Federspiel N.A."/>
            <person name="Fisher R.F."/>
            <person name="Gloux S."/>
            <person name="Godrie T."/>
            <person name="Goffeau A."/>
            <person name="Golding B."/>
            <person name="Gouzy J."/>
            <person name="Gurjal M."/>
            <person name="Hernandez-Lucas I."/>
            <person name="Hong A."/>
            <person name="Huizar L."/>
            <person name="Hyman R.W."/>
            <person name="Jones T."/>
            <person name="Kahn D."/>
            <person name="Kahn M.L."/>
            <person name="Kalman S."/>
            <person name="Keating D.H."/>
            <person name="Kiss E."/>
            <person name="Komp C."/>
            <person name="Lelaure V."/>
            <person name="Masuy D."/>
            <person name="Palm C."/>
            <person name="Peck M.C."/>
            <person name="Pohl T.M."/>
            <person name="Portetelle D."/>
            <person name="Purnelle B."/>
            <person name="Ramsperger U."/>
            <person name="Surzycki R."/>
            <person name="Thebault P."/>
            <person name="Vandenbol M."/>
            <person name="Vorhoelter F.J."/>
            <person name="Weidner S."/>
            <person name="Wells D.H."/>
            <person name="Wong K."/>
            <person name="Yeh K.-C."/>
            <person name="Batut J."/>
        </authorList>
    </citation>
    <scope>NUCLEOTIDE SEQUENCE [LARGE SCALE GENOMIC DNA]</scope>
    <source>
        <strain>1021</strain>
    </source>
</reference>
<dbReference type="EC" id="2.7.1.71" evidence="1"/>
<dbReference type="EMBL" id="AL591688">
    <property type="protein sequence ID" value="CAC47256.1"/>
    <property type="molecule type" value="Genomic_DNA"/>
</dbReference>
<dbReference type="RefSeq" id="NP_386783.1">
    <property type="nucleotide sequence ID" value="NC_003047.1"/>
</dbReference>
<dbReference type="RefSeq" id="WP_010970121.1">
    <property type="nucleotide sequence ID" value="NC_003047.1"/>
</dbReference>
<dbReference type="SMR" id="Q92ME6"/>
<dbReference type="EnsemblBacteria" id="CAC47256">
    <property type="protein sequence ID" value="CAC47256"/>
    <property type="gene ID" value="SMc00695"/>
</dbReference>
<dbReference type="KEGG" id="sme:SMc00695"/>
<dbReference type="PATRIC" id="fig|266834.11.peg.4179"/>
<dbReference type="eggNOG" id="COG0703">
    <property type="taxonomic scope" value="Bacteria"/>
</dbReference>
<dbReference type="HOGENOM" id="CLU_057607_2_0_5"/>
<dbReference type="OrthoDB" id="9800332at2"/>
<dbReference type="UniPathway" id="UPA00053">
    <property type="reaction ID" value="UER00088"/>
</dbReference>
<dbReference type="Proteomes" id="UP000001976">
    <property type="component" value="Chromosome"/>
</dbReference>
<dbReference type="GO" id="GO:0005829">
    <property type="term" value="C:cytosol"/>
    <property type="evidence" value="ECO:0007669"/>
    <property type="project" value="TreeGrafter"/>
</dbReference>
<dbReference type="GO" id="GO:0005524">
    <property type="term" value="F:ATP binding"/>
    <property type="evidence" value="ECO:0007669"/>
    <property type="project" value="UniProtKB-UniRule"/>
</dbReference>
<dbReference type="GO" id="GO:0000287">
    <property type="term" value="F:magnesium ion binding"/>
    <property type="evidence" value="ECO:0007669"/>
    <property type="project" value="UniProtKB-UniRule"/>
</dbReference>
<dbReference type="GO" id="GO:0004765">
    <property type="term" value="F:shikimate kinase activity"/>
    <property type="evidence" value="ECO:0007669"/>
    <property type="project" value="UniProtKB-UniRule"/>
</dbReference>
<dbReference type="GO" id="GO:0008652">
    <property type="term" value="P:amino acid biosynthetic process"/>
    <property type="evidence" value="ECO:0007669"/>
    <property type="project" value="UniProtKB-KW"/>
</dbReference>
<dbReference type="GO" id="GO:0009073">
    <property type="term" value="P:aromatic amino acid family biosynthetic process"/>
    <property type="evidence" value="ECO:0007669"/>
    <property type="project" value="UniProtKB-KW"/>
</dbReference>
<dbReference type="GO" id="GO:0009423">
    <property type="term" value="P:chorismate biosynthetic process"/>
    <property type="evidence" value="ECO:0007669"/>
    <property type="project" value="UniProtKB-UniRule"/>
</dbReference>
<dbReference type="CDD" id="cd00464">
    <property type="entry name" value="SK"/>
    <property type="match status" value="1"/>
</dbReference>
<dbReference type="Gene3D" id="3.40.50.300">
    <property type="entry name" value="P-loop containing nucleotide triphosphate hydrolases"/>
    <property type="match status" value="1"/>
</dbReference>
<dbReference type="HAMAP" id="MF_00109">
    <property type="entry name" value="Shikimate_kinase"/>
    <property type="match status" value="1"/>
</dbReference>
<dbReference type="InterPro" id="IPR027417">
    <property type="entry name" value="P-loop_NTPase"/>
</dbReference>
<dbReference type="InterPro" id="IPR031322">
    <property type="entry name" value="Shikimate/glucono_kinase"/>
</dbReference>
<dbReference type="InterPro" id="IPR000623">
    <property type="entry name" value="Shikimate_kinase/TSH1"/>
</dbReference>
<dbReference type="NCBIfam" id="NF010552">
    <property type="entry name" value="PRK13946.1"/>
    <property type="match status" value="1"/>
</dbReference>
<dbReference type="PANTHER" id="PTHR21087">
    <property type="entry name" value="SHIKIMATE KINASE"/>
    <property type="match status" value="1"/>
</dbReference>
<dbReference type="PANTHER" id="PTHR21087:SF16">
    <property type="entry name" value="SHIKIMATE KINASE 1, CHLOROPLASTIC"/>
    <property type="match status" value="1"/>
</dbReference>
<dbReference type="Pfam" id="PF01202">
    <property type="entry name" value="SKI"/>
    <property type="match status" value="1"/>
</dbReference>
<dbReference type="PRINTS" id="PR01100">
    <property type="entry name" value="SHIKIMTKNASE"/>
</dbReference>
<dbReference type="SUPFAM" id="SSF52540">
    <property type="entry name" value="P-loop containing nucleoside triphosphate hydrolases"/>
    <property type="match status" value="1"/>
</dbReference>
<accession>Q92ME6</accession>
<feature type="chain" id="PRO_0000237920" description="Shikimate kinase">
    <location>
        <begin position="1"/>
        <end position="192"/>
    </location>
</feature>
<feature type="binding site" evidence="1">
    <location>
        <begin position="32"/>
        <end position="37"/>
    </location>
    <ligand>
        <name>ATP</name>
        <dbReference type="ChEBI" id="CHEBI:30616"/>
    </ligand>
</feature>
<feature type="binding site" evidence="1">
    <location>
        <position position="36"/>
    </location>
    <ligand>
        <name>Mg(2+)</name>
        <dbReference type="ChEBI" id="CHEBI:18420"/>
    </ligand>
</feature>
<feature type="binding site" evidence="1">
    <location>
        <position position="54"/>
    </location>
    <ligand>
        <name>substrate</name>
    </ligand>
</feature>
<feature type="binding site" evidence="1">
    <location>
        <position position="78"/>
    </location>
    <ligand>
        <name>substrate</name>
    </ligand>
</feature>
<feature type="binding site" evidence="1">
    <location>
        <position position="100"/>
    </location>
    <ligand>
        <name>substrate</name>
    </ligand>
</feature>
<feature type="binding site" evidence="1">
    <location>
        <position position="138"/>
    </location>
    <ligand>
        <name>ATP</name>
        <dbReference type="ChEBI" id="CHEBI:30616"/>
    </ligand>
</feature>
<feature type="binding site" evidence="1">
    <location>
        <position position="157"/>
    </location>
    <ligand>
        <name>substrate</name>
    </ligand>
</feature>
<organism>
    <name type="scientific">Rhizobium meliloti (strain 1021)</name>
    <name type="common">Ensifer meliloti</name>
    <name type="synonym">Sinorhizobium meliloti</name>
    <dbReference type="NCBI Taxonomy" id="266834"/>
    <lineage>
        <taxon>Bacteria</taxon>
        <taxon>Pseudomonadati</taxon>
        <taxon>Pseudomonadota</taxon>
        <taxon>Alphaproteobacteria</taxon>
        <taxon>Hyphomicrobiales</taxon>
        <taxon>Rhizobiaceae</taxon>
        <taxon>Sinorhizobium/Ensifer group</taxon>
        <taxon>Sinorhizobium</taxon>
    </lineage>
</organism>
<gene>
    <name evidence="1" type="primary">aroK</name>
    <name type="ordered locus">R02677</name>
    <name type="ORF">SMc00695</name>
</gene>
<name>AROK_RHIME</name>
<evidence type="ECO:0000255" key="1">
    <source>
        <dbReference type="HAMAP-Rule" id="MF_00109"/>
    </source>
</evidence>
<keyword id="KW-0028">Amino-acid biosynthesis</keyword>
<keyword id="KW-0057">Aromatic amino acid biosynthesis</keyword>
<keyword id="KW-0067">ATP-binding</keyword>
<keyword id="KW-0963">Cytoplasm</keyword>
<keyword id="KW-0418">Kinase</keyword>
<keyword id="KW-0460">Magnesium</keyword>
<keyword id="KW-0479">Metal-binding</keyword>
<keyword id="KW-0547">Nucleotide-binding</keyword>
<keyword id="KW-1185">Reference proteome</keyword>
<keyword id="KW-0808">Transferase</keyword>
<protein>
    <recommendedName>
        <fullName evidence="1">Shikimate kinase</fullName>
        <shortName evidence="1">SK</shortName>
        <ecNumber evidence="1">2.7.1.71</ecNumber>
    </recommendedName>
</protein>